<evidence type="ECO:0000250" key="1"/>
<evidence type="ECO:0000250" key="2">
    <source>
        <dbReference type="UniProtKB" id="P08709"/>
    </source>
</evidence>
<evidence type="ECO:0000250" key="3">
    <source>
        <dbReference type="UniProtKB" id="P22457"/>
    </source>
</evidence>
<evidence type="ECO:0000255" key="4"/>
<evidence type="ECO:0000255" key="5">
    <source>
        <dbReference type="PROSITE-ProRule" id="PRU00076"/>
    </source>
</evidence>
<evidence type="ECO:0000255" key="6">
    <source>
        <dbReference type="PROSITE-ProRule" id="PRU00274"/>
    </source>
</evidence>
<evidence type="ECO:0000255" key="7">
    <source>
        <dbReference type="PROSITE-ProRule" id="PRU00463"/>
    </source>
</evidence>
<evidence type="ECO:0000269" key="8">
    <source>
    </source>
</evidence>
<evidence type="ECO:0000305" key="9"/>
<evidence type="ECO:0007829" key="10">
    <source>
        <dbReference type="PDB" id="5KXH"/>
    </source>
</evidence>
<dbReference type="EC" id="3.4.21.21"/>
<dbReference type="EMBL" id="U44795">
    <property type="protein sequence ID" value="AAC52570.1"/>
    <property type="molecule type" value="mRNA"/>
</dbReference>
<dbReference type="EMBL" id="U66079">
    <property type="protein sequence ID" value="AAC33796.1"/>
    <property type="molecule type" value="Genomic_DNA"/>
</dbReference>
<dbReference type="EMBL" id="BC061149">
    <property type="protein sequence ID" value="AAH61149.1"/>
    <property type="molecule type" value="mRNA"/>
</dbReference>
<dbReference type="CCDS" id="CCDS22104.1"/>
<dbReference type="RefSeq" id="NP_034302.2">
    <property type="nucleotide sequence ID" value="NM_010172.5"/>
</dbReference>
<dbReference type="PDB" id="5KXH">
    <property type="method" value="X-ray"/>
    <property type="resolution" value="1.33 A"/>
    <property type="chains" value="B=87-126"/>
</dbReference>
<dbReference type="PDB" id="5KY2">
    <property type="method" value="X-ray"/>
    <property type="resolution" value="1.47 A"/>
    <property type="chains" value="B=87-126"/>
</dbReference>
<dbReference type="PDB" id="5KY3">
    <property type="method" value="X-ray"/>
    <property type="resolution" value="1.53 A"/>
    <property type="chains" value="B=87-126"/>
</dbReference>
<dbReference type="PDBsum" id="5KXH"/>
<dbReference type="PDBsum" id="5KY2"/>
<dbReference type="PDBsum" id="5KY3"/>
<dbReference type="SMR" id="P70375"/>
<dbReference type="BioGRID" id="199575">
    <property type="interactions" value="8"/>
</dbReference>
<dbReference type="ComplexPortal" id="CPX-279">
    <property type="entry name" value="Coagulation factor VIIa - tissue factor complex"/>
</dbReference>
<dbReference type="FunCoup" id="P70375">
    <property type="interactions" value="62"/>
</dbReference>
<dbReference type="STRING" id="10090.ENSMUSP00000033820"/>
<dbReference type="GlyCosmos" id="P70375">
    <property type="glycosylation" value="3 sites, No reported glycans"/>
</dbReference>
<dbReference type="GlyGen" id="P70375">
    <property type="glycosylation" value="3 sites"/>
</dbReference>
<dbReference type="PhosphoSitePlus" id="P70375"/>
<dbReference type="SwissPalm" id="P70375"/>
<dbReference type="CPTAC" id="non-CPTAC-3914"/>
<dbReference type="jPOST" id="P70375"/>
<dbReference type="PaxDb" id="10090-ENSMUSP00000033820"/>
<dbReference type="PeptideAtlas" id="P70375"/>
<dbReference type="ProteomicsDB" id="271849"/>
<dbReference type="Antibodypedia" id="11679">
    <property type="antibodies" value="697 antibodies from 38 providers"/>
</dbReference>
<dbReference type="DNASU" id="14068"/>
<dbReference type="Ensembl" id="ENSMUST00000033820.4">
    <property type="protein sequence ID" value="ENSMUSP00000033820.4"/>
    <property type="gene ID" value="ENSMUSG00000031443.8"/>
</dbReference>
<dbReference type="GeneID" id="14068"/>
<dbReference type="KEGG" id="mmu:14068"/>
<dbReference type="UCSC" id="uc009kwr.2">
    <property type="organism name" value="mouse"/>
</dbReference>
<dbReference type="AGR" id="MGI:109325"/>
<dbReference type="CTD" id="2155"/>
<dbReference type="MGI" id="MGI:109325">
    <property type="gene designation" value="F7"/>
</dbReference>
<dbReference type="VEuPathDB" id="HostDB:ENSMUSG00000031443"/>
<dbReference type="eggNOG" id="ENOG502QRGI">
    <property type="taxonomic scope" value="Eukaryota"/>
</dbReference>
<dbReference type="GeneTree" id="ENSGT00940000154474"/>
<dbReference type="HOGENOM" id="CLU_006842_19_5_1"/>
<dbReference type="InParanoid" id="P70375"/>
<dbReference type="OMA" id="QGRNCET"/>
<dbReference type="OrthoDB" id="10004439at2759"/>
<dbReference type="PhylomeDB" id="P70375"/>
<dbReference type="TreeFam" id="TF327329"/>
<dbReference type="Reactome" id="R-MMU-140834">
    <property type="pathway name" value="Extrinsic Pathway of Fibrin Clot Formation"/>
</dbReference>
<dbReference type="Reactome" id="R-MMU-159740">
    <property type="pathway name" value="Gamma-carboxylation of protein precursors"/>
</dbReference>
<dbReference type="Reactome" id="R-MMU-159763">
    <property type="pathway name" value="Transport of gamma-carboxylated protein precursors from the endoplasmic reticulum to the Golgi apparatus"/>
</dbReference>
<dbReference type="Reactome" id="R-MMU-159782">
    <property type="pathway name" value="Removal of aminoterminal propeptides from gamma-carboxylated proteins"/>
</dbReference>
<dbReference type="BioGRID-ORCS" id="14068">
    <property type="hits" value="0 hits in 79 CRISPR screens"/>
</dbReference>
<dbReference type="PRO" id="PR:P70375"/>
<dbReference type="Proteomes" id="UP000000589">
    <property type="component" value="Chromosome 8"/>
</dbReference>
<dbReference type="RNAct" id="P70375">
    <property type="molecule type" value="protein"/>
</dbReference>
<dbReference type="Bgee" id="ENSMUSG00000031443">
    <property type="expression patterns" value="Expressed in left lobe of liver and 35 other cell types or tissues"/>
</dbReference>
<dbReference type="ExpressionAtlas" id="P70375">
    <property type="expression patterns" value="baseline and differential"/>
</dbReference>
<dbReference type="GO" id="GO:0005576">
    <property type="term" value="C:extracellular region"/>
    <property type="evidence" value="ECO:0000304"/>
    <property type="project" value="Reactome"/>
</dbReference>
<dbReference type="GO" id="GO:0005615">
    <property type="term" value="C:extracellular space"/>
    <property type="evidence" value="ECO:0007669"/>
    <property type="project" value="Ensembl"/>
</dbReference>
<dbReference type="GO" id="GO:1905286">
    <property type="term" value="C:serine-type peptidase complex"/>
    <property type="evidence" value="ECO:0007669"/>
    <property type="project" value="Ensembl"/>
</dbReference>
<dbReference type="GO" id="GO:0031982">
    <property type="term" value="C:vesicle"/>
    <property type="evidence" value="ECO:0007669"/>
    <property type="project" value="Ensembl"/>
</dbReference>
<dbReference type="GO" id="GO:0005509">
    <property type="term" value="F:calcium ion binding"/>
    <property type="evidence" value="ECO:0007669"/>
    <property type="project" value="InterPro"/>
</dbReference>
<dbReference type="GO" id="GO:0004252">
    <property type="term" value="F:serine-type endopeptidase activity"/>
    <property type="evidence" value="ECO:0007669"/>
    <property type="project" value="UniProtKB-EC"/>
</dbReference>
<dbReference type="GO" id="GO:0005102">
    <property type="term" value="F:signaling receptor binding"/>
    <property type="evidence" value="ECO:0007669"/>
    <property type="project" value="Ensembl"/>
</dbReference>
<dbReference type="GO" id="GO:0031100">
    <property type="term" value="P:animal organ regeneration"/>
    <property type="evidence" value="ECO:0007669"/>
    <property type="project" value="Ensembl"/>
</dbReference>
<dbReference type="GO" id="GO:0007596">
    <property type="term" value="P:blood coagulation"/>
    <property type="evidence" value="ECO:0000315"/>
    <property type="project" value="MGI"/>
</dbReference>
<dbReference type="GO" id="GO:0007623">
    <property type="term" value="P:circadian rhythm"/>
    <property type="evidence" value="ECO:0007669"/>
    <property type="project" value="Ensembl"/>
</dbReference>
<dbReference type="GO" id="GO:0030194">
    <property type="term" value="P:positive regulation of blood coagulation"/>
    <property type="evidence" value="ECO:0007669"/>
    <property type="project" value="Ensembl"/>
</dbReference>
<dbReference type="GO" id="GO:0002690">
    <property type="term" value="P:positive regulation of leukocyte chemotaxis"/>
    <property type="evidence" value="ECO:0007669"/>
    <property type="project" value="Ensembl"/>
</dbReference>
<dbReference type="GO" id="GO:0010641">
    <property type="term" value="P:positive regulation of platelet-derived growth factor receptor signaling pathway"/>
    <property type="evidence" value="ECO:0007669"/>
    <property type="project" value="Ensembl"/>
</dbReference>
<dbReference type="GO" id="GO:0050927">
    <property type="term" value="P:positive regulation of positive chemotaxis"/>
    <property type="evidence" value="ECO:0007669"/>
    <property type="project" value="Ensembl"/>
</dbReference>
<dbReference type="GO" id="GO:0032008">
    <property type="term" value="P:positive regulation of TOR signaling"/>
    <property type="evidence" value="ECO:0007669"/>
    <property type="project" value="Ensembl"/>
</dbReference>
<dbReference type="GO" id="GO:0016485">
    <property type="term" value="P:protein processing"/>
    <property type="evidence" value="ECO:0007669"/>
    <property type="project" value="Ensembl"/>
</dbReference>
<dbReference type="GO" id="GO:1904612">
    <property type="term" value="P:response to 2,3,7,8-tetrachlorodibenzodioxine"/>
    <property type="evidence" value="ECO:0007669"/>
    <property type="project" value="Ensembl"/>
</dbReference>
<dbReference type="GO" id="GO:1905217">
    <property type="term" value="P:response to astaxanthin"/>
    <property type="evidence" value="ECO:0007669"/>
    <property type="project" value="Ensembl"/>
</dbReference>
<dbReference type="GO" id="GO:0010037">
    <property type="term" value="P:response to carbon dioxide"/>
    <property type="evidence" value="ECO:0007669"/>
    <property type="project" value="Ensembl"/>
</dbReference>
<dbReference type="GO" id="GO:0070723">
    <property type="term" value="P:response to cholesterol"/>
    <property type="evidence" value="ECO:0007669"/>
    <property type="project" value="Ensembl"/>
</dbReference>
<dbReference type="GO" id="GO:0032355">
    <property type="term" value="P:response to estradiol"/>
    <property type="evidence" value="ECO:0007669"/>
    <property type="project" value="Ensembl"/>
</dbReference>
<dbReference type="GO" id="GO:0043627">
    <property type="term" value="P:response to estrogen"/>
    <property type="evidence" value="ECO:0007669"/>
    <property type="project" value="Ensembl"/>
</dbReference>
<dbReference type="GO" id="GO:0033595">
    <property type="term" value="P:response to genistein"/>
    <property type="evidence" value="ECO:0007669"/>
    <property type="project" value="Ensembl"/>
</dbReference>
<dbReference type="GO" id="GO:0060416">
    <property type="term" value="P:response to growth hormone"/>
    <property type="evidence" value="ECO:0007669"/>
    <property type="project" value="Ensembl"/>
</dbReference>
<dbReference type="GO" id="GO:0001666">
    <property type="term" value="P:response to hypoxia"/>
    <property type="evidence" value="ECO:0007669"/>
    <property type="project" value="Ensembl"/>
</dbReference>
<dbReference type="GO" id="GO:1904400">
    <property type="term" value="P:response to Thyroid stimulating hormone"/>
    <property type="evidence" value="ECO:0007669"/>
    <property type="project" value="Ensembl"/>
</dbReference>
<dbReference type="GO" id="GO:1905225">
    <property type="term" value="P:response to thyrotropin-releasing hormone"/>
    <property type="evidence" value="ECO:0007669"/>
    <property type="project" value="Ensembl"/>
</dbReference>
<dbReference type="GO" id="GO:0097068">
    <property type="term" value="P:response to thyroxine"/>
    <property type="evidence" value="ECO:0007669"/>
    <property type="project" value="Ensembl"/>
</dbReference>
<dbReference type="GO" id="GO:0032571">
    <property type="term" value="P:response to vitamin K"/>
    <property type="evidence" value="ECO:0007669"/>
    <property type="project" value="Ensembl"/>
</dbReference>
<dbReference type="CDD" id="cd00054">
    <property type="entry name" value="EGF_CA"/>
    <property type="match status" value="1"/>
</dbReference>
<dbReference type="CDD" id="cd00190">
    <property type="entry name" value="Tryp_SPc"/>
    <property type="match status" value="1"/>
</dbReference>
<dbReference type="FunFam" id="2.10.25.10:FF:000259">
    <property type="entry name" value="Coagulation factor VII"/>
    <property type="match status" value="1"/>
</dbReference>
<dbReference type="FunFam" id="2.10.25.10:FF:000420">
    <property type="entry name" value="Coagulation factor VII"/>
    <property type="match status" value="1"/>
</dbReference>
<dbReference type="FunFam" id="2.40.10.10:FF:000013">
    <property type="entry name" value="Coagulation factor X"/>
    <property type="match status" value="1"/>
</dbReference>
<dbReference type="FunFam" id="4.10.740.10:FF:000001">
    <property type="entry name" value="vitamin K-dependent protein S"/>
    <property type="match status" value="1"/>
</dbReference>
<dbReference type="Gene3D" id="4.10.740.10">
    <property type="entry name" value="Coagulation Factor IX"/>
    <property type="match status" value="1"/>
</dbReference>
<dbReference type="Gene3D" id="2.10.25.10">
    <property type="entry name" value="Laminin"/>
    <property type="match status" value="2"/>
</dbReference>
<dbReference type="Gene3D" id="2.40.10.10">
    <property type="entry name" value="Trypsin-like serine proteases"/>
    <property type="match status" value="2"/>
</dbReference>
<dbReference type="InterPro" id="IPR017857">
    <property type="entry name" value="Coagulation_fac-like_Gla_dom"/>
</dbReference>
<dbReference type="InterPro" id="IPR001881">
    <property type="entry name" value="EGF-like_Ca-bd_dom"/>
</dbReference>
<dbReference type="InterPro" id="IPR000742">
    <property type="entry name" value="EGF-like_dom"/>
</dbReference>
<dbReference type="InterPro" id="IPR000152">
    <property type="entry name" value="EGF-type_Asp/Asn_hydroxyl_site"/>
</dbReference>
<dbReference type="InterPro" id="IPR018097">
    <property type="entry name" value="EGF_Ca-bd_CS"/>
</dbReference>
<dbReference type="InterPro" id="IPR035972">
    <property type="entry name" value="GLA-like_dom_SF"/>
</dbReference>
<dbReference type="InterPro" id="IPR000294">
    <property type="entry name" value="GLA_domain"/>
</dbReference>
<dbReference type="InterPro" id="IPR012224">
    <property type="entry name" value="Pept_S1A_FX"/>
</dbReference>
<dbReference type="InterPro" id="IPR050442">
    <property type="entry name" value="Peptidase_S1_coag_factors"/>
</dbReference>
<dbReference type="InterPro" id="IPR009003">
    <property type="entry name" value="Peptidase_S1_PA"/>
</dbReference>
<dbReference type="InterPro" id="IPR043504">
    <property type="entry name" value="Peptidase_S1_PA_chymotrypsin"/>
</dbReference>
<dbReference type="InterPro" id="IPR001314">
    <property type="entry name" value="Peptidase_S1A"/>
</dbReference>
<dbReference type="InterPro" id="IPR001254">
    <property type="entry name" value="Trypsin_dom"/>
</dbReference>
<dbReference type="InterPro" id="IPR018114">
    <property type="entry name" value="TRYPSIN_HIS"/>
</dbReference>
<dbReference type="InterPro" id="IPR033116">
    <property type="entry name" value="TRYPSIN_SER"/>
</dbReference>
<dbReference type="PANTHER" id="PTHR24278">
    <property type="entry name" value="COAGULATION FACTOR"/>
    <property type="match status" value="1"/>
</dbReference>
<dbReference type="PANTHER" id="PTHR24278:SF26">
    <property type="entry name" value="COAGULATION FACTOR VII"/>
    <property type="match status" value="1"/>
</dbReference>
<dbReference type="Pfam" id="PF00008">
    <property type="entry name" value="EGF"/>
    <property type="match status" value="1"/>
</dbReference>
<dbReference type="Pfam" id="PF14670">
    <property type="entry name" value="FXa_inhibition"/>
    <property type="match status" value="1"/>
</dbReference>
<dbReference type="Pfam" id="PF00594">
    <property type="entry name" value="Gla"/>
    <property type="match status" value="1"/>
</dbReference>
<dbReference type="Pfam" id="PF00089">
    <property type="entry name" value="Trypsin"/>
    <property type="match status" value="1"/>
</dbReference>
<dbReference type="PIRSF" id="PIRSF001143">
    <property type="entry name" value="Factor_X"/>
    <property type="match status" value="1"/>
</dbReference>
<dbReference type="PRINTS" id="PR00722">
    <property type="entry name" value="CHYMOTRYPSIN"/>
</dbReference>
<dbReference type="PRINTS" id="PR00010">
    <property type="entry name" value="EGFBLOOD"/>
</dbReference>
<dbReference type="PRINTS" id="PR00001">
    <property type="entry name" value="GLABLOOD"/>
</dbReference>
<dbReference type="SMART" id="SM00181">
    <property type="entry name" value="EGF"/>
    <property type="match status" value="2"/>
</dbReference>
<dbReference type="SMART" id="SM00179">
    <property type="entry name" value="EGF_CA"/>
    <property type="match status" value="1"/>
</dbReference>
<dbReference type="SMART" id="SM00069">
    <property type="entry name" value="GLA"/>
    <property type="match status" value="1"/>
</dbReference>
<dbReference type="SMART" id="SM00020">
    <property type="entry name" value="Tryp_SPc"/>
    <property type="match status" value="1"/>
</dbReference>
<dbReference type="SUPFAM" id="SSF57196">
    <property type="entry name" value="EGF/Laminin"/>
    <property type="match status" value="2"/>
</dbReference>
<dbReference type="SUPFAM" id="SSF57630">
    <property type="entry name" value="GLA-domain"/>
    <property type="match status" value="1"/>
</dbReference>
<dbReference type="SUPFAM" id="SSF50494">
    <property type="entry name" value="Trypsin-like serine proteases"/>
    <property type="match status" value="1"/>
</dbReference>
<dbReference type="PROSITE" id="PS00010">
    <property type="entry name" value="ASX_HYDROXYL"/>
    <property type="match status" value="1"/>
</dbReference>
<dbReference type="PROSITE" id="PS00022">
    <property type="entry name" value="EGF_1"/>
    <property type="match status" value="1"/>
</dbReference>
<dbReference type="PROSITE" id="PS50026">
    <property type="entry name" value="EGF_3"/>
    <property type="match status" value="1"/>
</dbReference>
<dbReference type="PROSITE" id="PS01187">
    <property type="entry name" value="EGF_CA"/>
    <property type="match status" value="1"/>
</dbReference>
<dbReference type="PROSITE" id="PS00011">
    <property type="entry name" value="GLA_1"/>
    <property type="match status" value="1"/>
</dbReference>
<dbReference type="PROSITE" id="PS50998">
    <property type="entry name" value="GLA_2"/>
    <property type="match status" value="1"/>
</dbReference>
<dbReference type="PROSITE" id="PS50240">
    <property type="entry name" value="TRYPSIN_DOM"/>
    <property type="match status" value="1"/>
</dbReference>
<dbReference type="PROSITE" id="PS00134">
    <property type="entry name" value="TRYPSIN_HIS"/>
    <property type="match status" value="1"/>
</dbReference>
<dbReference type="PROSITE" id="PS00135">
    <property type="entry name" value="TRYPSIN_SER"/>
    <property type="match status" value="1"/>
</dbReference>
<name>FA7_MOUSE</name>
<gene>
    <name type="primary">F7</name>
    <name type="synonym">Cf7</name>
</gene>
<keyword id="KW-0002">3D-structure</keyword>
<keyword id="KW-0094">Blood coagulation</keyword>
<keyword id="KW-0106">Calcium</keyword>
<keyword id="KW-0165">Cleavage on pair of basic residues</keyword>
<keyword id="KW-1015">Disulfide bond</keyword>
<keyword id="KW-0245">EGF-like domain</keyword>
<keyword id="KW-0301">Gamma-carboxyglutamic acid</keyword>
<keyword id="KW-0325">Glycoprotein</keyword>
<keyword id="KW-0356">Hemostasis</keyword>
<keyword id="KW-0378">Hydrolase</keyword>
<keyword id="KW-0379">Hydroxylation</keyword>
<keyword id="KW-0645">Protease</keyword>
<keyword id="KW-1185">Reference proteome</keyword>
<keyword id="KW-0677">Repeat</keyword>
<keyword id="KW-0964">Secreted</keyword>
<keyword id="KW-0720">Serine protease</keyword>
<keyword id="KW-0732">Signal</keyword>
<keyword id="KW-0865">Zymogen</keyword>
<proteinExistence type="evidence at protein level"/>
<protein>
    <recommendedName>
        <fullName>Coagulation factor VII</fullName>
        <ecNumber>3.4.21.21</ecNumber>
    </recommendedName>
    <alternativeName>
        <fullName>Serum prothrombin conversion accelerator</fullName>
    </alternativeName>
    <component>
        <recommendedName>
            <fullName>Factor VII light chain</fullName>
        </recommendedName>
    </component>
    <component>
        <recommendedName>
            <fullName>Factor VII heavy chain</fullName>
        </recommendedName>
    </component>
</protein>
<organism>
    <name type="scientific">Mus musculus</name>
    <name type="common">Mouse</name>
    <dbReference type="NCBI Taxonomy" id="10090"/>
    <lineage>
        <taxon>Eukaryota</taxon>
        <taxon>Metazoa</taxon>
        <taxon>Chordata</taxon>
        <taxon>Craniata</taxon>
        <taxon>Vertebrata</taxon>
        <taxon>Euteleostomi</taxon>
        <taxon>Mammalia</taxon>
        <taxon>Eutheria</taxon>
        <taxon>Euarchontoglires</taxon>
        <taxon>Glires</taxon>
        <taxon>Rodentia</taxon>
        <taxon>Myomorpha</taxon>
        <taxon>Muroidea</taxon>
        <taxon>Muridae</taxon>
        <taxon>Murinae</taxon>
        <taxon>Mus</taxon>
        <taxon>Mus</taxon>
    </lineage>
</organism>
<comment type="function">
    <text evidence="1">Initiates the extrinsic pathway of blood coagulation. Serine protease that circulates in the blood in a zymogen form. Factor VII is converted to factor VIIa by factor Xa, factor XIIa, factor IXa, or thrombin by minor proteolysis. In the presence of tissue factor and calcium ions, factor VIIa then converts factor X to factor Xa by limited proteolysis. Factor VIIa also converts factor IX to factor IXa in the presence of tissue factor and calcium (By similarity).</text>
</comment>
<comment type="catalytic activity">
    <reaction>
        <text>Selective cleavage of Arg-|-Ile bond in factor X to form factor Xa.</text>
        <dbReference type="EC" id="3.4.21.21"/>
    </reaction>
</comment>
<comment type="subunit">
    <text evidence="1">Heterodimer of a light chain and a heavy chain linked by a disulfide bond.</text>
</comment>
<comment type="subcellular location">
    <subcellularLocation>
        <location>Secreted</location>
    </subcellularLocation>
</comment>
<comment type="tissue specificity">
    <text>Plasma and liver.</text>
</comment>
<comment type="induction">
    <text evidence="8">Expression in the liver and plasma oscillates in a circadian manner.</text>
</comment>
<comment type="PTM">
    <text evidence="1">The vitamin K-dependent, enzymatic carboxylation of some glutamate residues allows the modified protein to bind calcium.</text>
</comment>
<comment type="PTM">
    <text evidence="1">The iron and 2-oxoglutarate dependent 3-hydroxylation of aspartate and asparagine is (R) stereospecific within EGF domains.</text>
</comment>
<comment type="PTM">
    <text evidence="1">Can be either O-glucosylated or O-xylosylated at Ser-93 by POGLUT1.</text>
</comment>
<comment type="similarity">
    <text evidence="6">Belongs to the peptidase S1 family.</text>
</comment>
<feature type="signal peptide" evidence="4">
    <location>
        <begin position="1"/>
        <end position="24"/>
    </location>
</feature>
<feature type="propeptide" id="PRO_0000027732" evidence="4">
    <location>
        <begin position="25"/>
        <end position="41"/>
    </location>
</feature>
<feature type="chain" id="PRO_0000027733" description="Factor VII light chain">
    <location>
        <begin position="42"/>
        <end position="193"/>
    </location>
</feature>
<feature type="chain" id="PRO_0000027734" description="Factor VII heavy chain">
    <location>
        <begin position="194"/>
        <end position="446"/>
    </location>
</feature>
<feature type="domain" description="Gla" evidence="7">
    <location>
        <begin position="42"/>
        <end position="86"/>
    </location>
</feature>
<feature type="domain" description="EGF-like 1; calcium-binding" evidence="5">
    <location>
        <begin position="87"/>
        <end position="123"/>
    </location>
</feature>
<feature type="domain" description="EGF-like 2" evidence="5">
    <location>
        <begin position="128"/>
        <end position="169"/>
    </location>
</feature>
<feature type="domain" description="Peptidase S1" evidence="6">
    <location>
        <begin position="194"/>
        <end position="433"/>
    </location>
</feature>
<feature type="active site" description="Charge relay system" evidence="1">
    <location>
        <position position="234"/>
    </location>
</feature>
<feature type="active site" description="Charge relay system" evidence="1">
    <location>
        <position position="283"/>
    </location>
</feature>
<feature type="active site" description="Charge relay system" evidence="1">
    <location>
        <position position="385"/>
    </location>
</feature>
<feature type="binding site" evidence="1">
    <location>
        <position position="379"/>
    </location>
    <ligand>
        <name>substrate</name>
    </ligand>
</feature>
<feature type="site" description="Cleavage; by factor Xa, factor XIIa, factor IXa, or thrombin" evidence="1">
    <location>
        <begin position="193"/>
        <end position="194"/>
    </location>
</feature>
<feature type="modified residue" description="4-carboxyglutamate" evidence="3 7">
    <location>
        <position position="47"/>
    </location>
</feature>
<feature type="modified residue" description="4-carboxyglutamate" evidence="3 7">
    <location>
        <position position="48"/>
    </location>
</feature>
<feature type="modified residue" description="4-carboxyglutamate" evidence="3 7">
    <location>
        <position position="55"/>
    </location>
</feature>
<feature type="modified residue" description="4-carboxyglutamate" evidence="3 7">
    <location>
        <position position="57"/>
    </location>
</feature>
<feature type="modified residue" description="4-carboxyglutamate" evidence="3 7">
    <location>
        <position position="60"/>
    </location>
</feature>
<feature type="modified residue" description="4-carboxyglutamate" evidence="3 7">
    <location>
        <position position="61"/>
    </location>
</feature>
<feature type="modified residue" description="4-carboxyglutamate" evidence="3 7">
    <location>
        <position position="66"/>
    </location>
</feature>
<feature type="modified residue" description="4-carboxyglutamate" evidence="3 7">
    <location>
        <position position="67"/>
    </location>
</feature>
<feature type="modified residue" description="4-carboxyglutamate" evidence="3 7">
    <location>
        <position position="70"/>
    </location>
</feature>
<feature type="modified residue" description="4-carboxyglutamate" evidence="3 7">
    <location>
        <position position="76"/>
    </location>
</feature>
<feature type="modified residue" description="(3R)-3-hydroxyaspartate" evidence="1">
    <location>
        <position position="104"/>
    </location>
</feature>
<feature type="glycosylation site" description="O-linked (Glc...) serine; alternate" evidence="2">
    <location>
        <position position="93"/>
    </location>
</feature>
<feature type="glycosylation site" description="O-linked (Xyl...) serine; alternate" evidence="2">
    <location>
        <position position="93"/>
    </location>
</feature>
<feature type="glycosylation site" description="N-linked (GlcNAc...) asparagine" evidence="4">
    <location>
        <position position="186"/>
    </location>
</feature>
<feature type="glycosylation site" description="N-linked (GlcNAc...) asparagine" evidence="4">
    <location>
        <position position="244"/>
    </location>
</feature>
<feature type="disulfide bond" evidence="1">
    <location>
        <begin position="58"/>
        <end position="63"/>
    </location>
</feature>
<feature type="disulfide bond" evidence="1">
    <location>
        <begin position="91"/>
        <end position="102"/>
    </location>
</feature>
<feature type="disulfide bond" evidence="1">
    <location>
        <begin position="96"/>
        <end position="111"/>
    </location>
</feature>
<feature type="disulfide bond" evidence="1">
    <location>
        <begin position="113"/>
        <end position="122"/>
    </location>
</feature>
<feature type="disulfide bond" evidence="1">
    <location>
        <begin position="132"/>
        <end position="143"/>
    </location>
</feature>
<feature type="disulfide bond" evidence="1">
    <location>
        <begin position="139"/>
        <end position="153"/>
    </location>
</feature>
<feature type="disulfide bond" evidence="1">
    <location>
        <begin position="155"/>
        <end position="168"/>
    </location>
</feature>
<feature type="disulfide bond" evidence="1">
    <location>
        <begin position="176"/>
        <end position="303"/>
    </location>
</feature>
<feature type="disulfide bond" evidence="1">
    <location>
        <begin position="200"/>
        <end position="205"/>
    </location>
</feature>
<feature type="disulfide bond" evidence="1">
    <location>
        <begin position="219"/>
        <end position="235"/>
    </location>
</feature>
<feature type="disulfide bond" evidence="1">
    <location>
        <begin position="351"/>
        <end position="370"/>
    </location>
</feature>
<feature type="disulfide bond" evidence="1">
    <location>
        <begin position="381"/>
        <end position="409"/>
    </location>
</feature>
<feature type="sequence conflict" description="In Ref. 2; AAC52570." evidence="9" ref="2">
    <original>G</original>
    <variation>V</variation>
    <location>
        <position position="99"/>
    </location>
</feature>
<feature type="helix" evidence="10">
    <location>
        <begin position="91"/>
        <end position="93"/>
    </location>
</feature>
<feature type="strand" evidence="10">
    <location>
        <begin position="101"/>
        <end position="105"/>
    </location>
</feature>
<feature type="strand" evidence="10">
    <location>
        <begin position="108"/>
        <end position="112"/>
    </location>
</feature>
<feature type="strand" evidence="10">
    <location>
        <begin position="117"/>
        <end position="119"/>
    </location>
</feature>
<sequence length="446" mass="50276">MVPQAHGLLLLCFLLQLQGPLGTAVFITQEEAHGVLHRQRRANSLLEELWPGSLERECNEEQCSFEEAREIFKSPERTKQFWIVYSDGDQCASNPCQNGGTCQDHLKSYVCFCLLDFEGRNCEKSKNEQLICANENGDCDQYCRDHVGTKRTCSCHEDYTLQPDEVSCKPKVEYPCGRIPVVEKRNSSSRQGRIVGGNVCPKGECPWQAVLKINGLLLCGAVLLDARWIVTAAHCFDNIRYWGNITVVMGEHDFSEKDGDEQVRRVTQVIMPDKYIRGKINHDIALLRLHRPVTFTDYVVPLCLPEKSFSENTLARIRFSRVSGWGQLLDRGATALELMSIEVPRLMTQDCLEHAKHSSNTPKITENMFCAGYMDGTKDACKGDSGGPHATHYHGTWYLTGVVSWGEGCAAIGHIGVYTRVSQYIDWLVRHMDSKLQVGVFRLPLL</sequence>
<reference key="1">
    <citation type="journal article" date="1996" name="Thromb. Haemost.">
        <title>Characterization of a cDNA encoding murine coagulation factor VII.</title>
        <authorList>
            <person name="Idusogie E."/>
            <person name="Rosen E."/>
            <person name="Geng J.P."/>
            <person name="Carmeliet P."/>
            <person name="Collen D."/>
            <person name="Castellino F.J."/>
        </authorList>
    </citation>
    <scope>NUCLEOTIDE SEQUENCE [MRNA]</scope>
    <source>
        <tissue>Liver</tissue>
    </source>
</reference>
<reference key="2">
    <citation type="journal article" date="1996" name="Thromb. Haemost.">
        <title>Nucleotide structure and characterization of the murine blood coagulation factor VII gene.</title>
        <authorList>
            <person name="Idusogie E."/>
            <person name="Rosen E.D."/>
            <person name="Carmeliet P."/>
            <person name="Collen D."/>
            <person name="Castellino F.J."/>
        </authorList>
    </citation>
    <scope>NUCLEOTIDE SEQUENCE</scope>
</reference>
<reference key="3">
    <citation type="journal article" date="2004" name="Genome Res.">
        <title>The status, quality, and expansion of the NIH full-length cDNA project: the Mammalian Gene Collection (MGC).</title>
        <authorList>
            <consortium name="The MGC Project Team"/>
        </authorList>
    </citation>
    <scope>NUCLEOTIDE SEQUENCE [LARGE SCALE MRNA]</scope>
    <source>
        <tissue>Liver</tissue>
    </source>
</reference>
<reference key="4">
    <citation type="journal article" date="2008" name="Mol. Cell. Biol.">
        <title>Evidence for an overlapping role of CLOCK and NPAS2 transcription factors in liver circadian oscillators.</title>
        <authorList>
            <person name="Bertolucci C."/>
            <person name="Cavallari N."/>
            <person name="Colognesi I."/>
            <person name="Aguzzi J."/>
            <person name="Chen Z."/>
            <person name="Caruso P."/>
            <person name="Foa A."/>
            <person name="Tosini G."/>
            <person name="Bernardi F."/>
            <person name="Pinotti M."/>
        </authorList>
    </citation>
    <scope>INDUCTION</scope>
</reference>
<accession>P70375</accession>
<accession>Q61109</accession>